<comment type="function">
    <text evidence="1">Catalyzes the attachment of proline to tRNA(Pro) in a two-step reaction: proline is first activated by ATP to form Pro-AMP and then transferred to the acceptor end of tRNA(Pro). As ProRS can inadvertently accommodate and process non-cognate amino acids such as alanine and cysteine, to avoid such errors it has two additional distinct editing activities against alanine. One activity is designated as 'pretransfer' editing and involves the tRNA(Pro)-independent hydrolysis of activated Ala-AMP. The other activity is designated 'posttransfer' editing and involves deacylation of mischarged Ala-tRNA(Pro). The misacylated Cys-tRNA(Pro) is not edited by ProRS.</text>
</comment>
<comment type="catalytic activity">
    <reaction evidence="1">
        <text>tRNA(Pro) + L-proline + ATP = L-prolyl-tRNA(Pro) + AMP + diphosphate</text>
        <dbReference type="Rhea" id="RHEA:14305"/>
        <dbReference type="Rhea" id="RHEA-COMP:9700"/>
        <dbReference type="Rhea" id="RHEA-COMP:9702"/>
        <dbReference type="ChEBI" id="CHEBI:30616"/>
        <dbReference type="ChEBI" id="CHEBI:33019"/>
        <dbReference type="ChEBI" id="CHEBI:60039"/>
        <dbReference type="ChEBI" id="CHEBI:78442"/>
        <dbReference type="ChEBI" id="CHEBI:78532"/>
        <dbReference type="ChEBI" id="CHEBI:456215"/>
        <dbReference type="EC" id="6.1.1.15"/>
    </reaction>
</comment>
<comment type="subunit">
    <text evidence="1">Homodimer.</text>
</comment>
<comment type="subcellular location">
    <subcellularLocation>
        <location evidence="1">Cytoplasm</location>
    </subcellularLocation>
</comment>
<comment type="domain">
    <text evidence="1">Consists of three domains: the N-terminal catalytic domain, the editing domain and the C-terminal anticodon-binding domain.</text>
</comment>
<comment type="similarity">
    <text evidence="1">Belongs to the class-II aminoacyl-tRNA synthetase family. ProS type 1 subfamily.</text>
</comment>
<protein>
    <recommendedName>
        <fullName evidence="1">Proline--tRNA ligase</fullName>
        <ecNumber evidence="1">6.1.1.15</ecNumber>
    </recommendedName>
    <alternativeName>
        <fullName evidence="1">Prolyl-tRNA synthetase</fullName>
        <shortName evidence="1">ProRS</shortName>
    </alternativeName>
</protein>
<reference key="1">
    <citation type="journal article" date="2007" name="J. Bacteriol.">
        <title>The complete genome sequence of Campylobacter jejuni strain 81116 (NCTC11828).</title>
        <authorList>
            <person name="Pearson B.M."/>
            <person name="Gaskin D.J.H."/>
            <person name="Segers R.P.A.M."/>
            <person name="Wells J.M."/>
            <person name="Nuijten P.J.M."/>
            <person name="van Vliet A.H.M."/>
        </authorList>
    </citation>
    <scope>NUCLEOTIDE SEQUENCE [LARGE SCALE GENOMIC DNA]</scope>
    <source>
        <strain>81116 / NCTC 11828</strain>
    </source>
</reference>
<accession>A8FKW6</accession>
<organism>
    <name type="scientific">Campylobacter jejuni subsp. jejuni serotype O:6 (strain 81116 / NCTC 11828)</name>
    <dbReference type="NCBI Taxonomy" id="407148"/>
    <lineage>
        <taxon>Bacteria</taxon>
        <taxon>Pseudomonadati</taxon>
        <taxon>Campylobacterota</taxon>
        <taxon>Epsilonproteobacteria</taxon>
        <taxon>Campylobacterales</taxon>
        <taxon>Campylobacteraceae</taxon>
        <taxon>Campylobacter</taxon>
    </lineage>
</organism>
<gene>
    <name evidence="1" type="primary">proS</name>
    <name type="ordered locus">C8J_0504</name>
</gene>
<dbReference type="EC" id="6.1.1.15" evidence="1"/>
<dbReference type="EMBL" id="CP000814">
    <property type="protein sequence ID" value="ABV52103.1"/>
    <property type="molecule type" value="Genomic_DNA"/>
</dbReference>
<dbReference type="SMR" id="A8FKW6"/>
<dbReference type="KEGG" id="cju:C8J_0504"/>
<dbReference type="HOGENOM" id="CLU_016739_0_0_7"/>
<dbReference type="GO" id="GO:0005829">
    <property type="term" value="C:cytosol"/>
    <property type="evidence" value="ECO:0007669"/>
    <property type="project" value="TreeGrafter"/>
</dbReference>
<dbReference type="GO" id="GO:0002161">
    <property type="term" value="F:aminoacyl-tRNA deacylase activity"/>
    <property type="evidence" value="ECO:0007669"/>
    <property type="project" value="InterPro"/>
</dbReference>
<dbReference type="GO" id="GO:0005524">
    <property type="term" value="F:ATP binding"/>
    <property type="evidence" value="ECO:0007669"/>
    <property type="project" value="UniProtKB-UniRule"/>
</dbReference>
<dbReference type="GO" id="GO:0004827">
    <property type="term" value="F:proline-tRNA ligase activity"/>
    <property type="evidence" value="ECO:0007669"/>
    <property type="project" value="UniProtKB-UniRule"/>
</dbReference>
<dbReference type="GO" id="GO:0006433">
    <property type="term" value="P:prolyl-tRNA aminoacylation"/>
    <property type="evidence" value="ECO:0007669"/>
    <property type="project" value="UniProtKB-UniRule"/>
</dbReference>
<dbReference type="CDD" id="cd04334">
    <property type="entry name" value="ProRS-INS"/>
    <property type="match status" value="1"/>
</dbReference>
<dbReference type="CDD" id="cd00861">
    <property type="entry name" value="ProRS_anticodon_short"/>
    <property type="match status" value="1"/>
</dbReference>
<dbReference type="CDD" id="cd00779">
    <property type="entry name" value="ProRS_core_prok"/>
    <property type="match status" value="1"/>
</dbReference>
<dbReference type="FunFam" id="3.30.930.10:FF:000065">
    <property type="entry name" value="Proline--tRNA ligase"/>
    <property type="match status" value="1"/>
</dbReference>
<dbReference type="FunFam" id="3.30.930.10:FF:000066">
    <property type="entry name" value="Proline--tRNA ligase"/>
    <property type="match status" value="1"/>
</dbReference>
<dbReference type="Gene3D" id="3.40.50.800">
    <property type="entry name" value="Anticodon-binding domain"/>
    <property type="match status" value="1"/>
</dbReference>
<dbReference type="Gene3D" id="3.30.930.10">
    <property type="entry name" value="Bira Bifunctional Protein, Domain 2"/>
    <property type="match status" value="2"/>
</dbReference>
<dbReference type="HAMAP" id="MF_01569">
    <property type="entry name" value="Pro_tRNA_synth_type1"/>
    <property type="match status" value="1"/>
</dbReference>
<dbReference type="InterPro" id="IPR002314">
    <property type="entry name" value="aa-tRNA-synt_IIb"/>
</dbReference>
<dbReference type="InterPro" id="IPR006195">
    <property type="entry name" value="aa-tRNA-synth_II"/>
</dbReference>
<dbReference type="InterPro" id="IPR045864">
    <property type="entry name" value="aa-tRNA-synth_II/BPL/LPL"/>
</dbReference>
<dbReference type="InterPro" id="IPR004154">
    <property type="entry name" value="Anticodon-bd"/>
</dbReference>
<dbReference type="InterPro" id="IPR036621">
    <property type="entry name" value="Anticodon-bd_dom_sf"/>
</dbReference>
<dbReference type="InterPro" id="IPR002316">
    <property type="entry name" value="Pro-tRNA-ligase_IIa"/>
</dbReference>
<dbReference type="InterPro" id="IPR004500">
    <property type="entry name" value="Pro-tRNA-synth_IIa_bac-type"/>
</dbReference>
<dbReference type="InterPro" id="IPR023717">
    <property type="entry name" value="Pro-tRNA-Synthase_IIa_type1"/>
</dbReference>
<dbReference type="InterPro" id="IPR050062">
    <property type="entry name" value="Pro-tRNA_synthetase"/>
</dbReference>
<dbReference type="InterPro" id="IPR044140">
    <property type="entry name" value="ProRS_anticodon_short"/>
</dbReference>
<dbReference type="InterPro" id="IPR033730">
    <property type="entry name" value="ProRS_core_prok"/>
</dbReference>
<dbReference type="InterPro" id="IPR036754">
    <property type="entry name" value="YbaK/aa-tRNA-synt-asso_dom_sf"/>
</dbReference>
<dbReference type="InterPro" id="IPR007214">
    <property type="entry name" value="YbaK/aa-tRNA-synth-assoc-dom"/>
</dbReference>
<dbReference type="NCBIfam" id="NF006625">
    <property type="entry name" value="PRK09194.1"/>
    <property type="match status" value="1"/>
</dbReference>
<dbReference type="NCBIfam" id="TIGR00409">
    <property type="entry name" value="proS_fam_II"/>
    <property type="match status" value="1"/>
</dbReference>
<dbReference type="PANTHER" id="PTHR42753">
    <property type="entry name" value="MITOCHONDRIAL RIBOSOME PROTEIN L39/PROLYL-TRNA LIGASE FAMILY MEMBER"/>
    <property type="match status" value="1"/>
</dbReference>
<dbReference type="PANTHER" id="PTHR42753:SF2">
    <property type="entry name" value="PROLINE--TRNA LIGASE"/>
    <property type="match status" value="1"/>
</dbReference>
<dbReference type="Pfam" id="PF03129">
    <property type="entry name" value="HGTP_anticodon"/>
    <property type="match status" value="1"/>
</dbReference>
<dbReference type="Pfam" id="PF00587">
    <property type="entry name" value="tRNA-synt_2b"/>
    <property type="match status" value="1"/>
</dbReference>
<dbReference type="Pfam" id="PF04073">
    <property type="entry name" value="tRNA_edit"/>
    <property type="match status" value="1"/>
</dbReference>
<dbReference type="PRINTS" id="PR01046">
    <property type="entry name" value="TRNASYNTHPRO"/>
</dbReference>
<dbReference type="SUPFAM" id="SSF52954">
    <property type="entry name" value="Class II aaRS ABD-related"/>
    <property type="match status" value="1"/>
</dbReference>
<dbReference type="SUPFAM" id="SSF55681">
    <property type="entry name" value="Class II aaRS and biotin synthetases"/>
    <property type="match status" value="1"/>
</dbReference>
<dbReference type="SUPFAM" id="SSF55826">
    <property type="entry name" value="YbaK/ProRS associated domain"/>
    <property type="match status" value="1"/>
</dbReference>
<dbReference type="PROSITE" id="PS50862">
    <property type="entry name" value="AA_TRNA_LIGASE_II"/>
    <property type="match status" value="1"/>
</dbReference>
<feature type="chain" id="PRO_0000318630" description="Proline--tRNA ligase">
    <location>
        <begin position="1"/>
        <end position="568"/>
    </location>
</feature>
<evidence type="ECO:0000255" key="1">
    <source>
        <dbReference type="HAMAP-Rule" id="MF_01569"/>
    </source>
</evidence>
<name>SYP_CAMJ8</name>
<proteinExistence type="inferred from homology"/>
<keyword id="KW-0030">Aminoacyl-tRNA synthetase</keyword>
<keyword id="KW-0067">ATP-binding</keyword>
<keyword id="KW-0963">Cytoplasm</keyword>
<keyword id="KW-0436">Ligase</keyword>
<keyword id="KW-0547">Nucleotide-binding</keyword>
<keyword id="KW-0648">Protein biosynthesis</keyword>
<sequence length="568" mass="64338">MRFTKFYAPSLKEAPKDASLPSHIFLTRAGFIEQIGSGLYNFLPLGKRVLDKIKNIVKEEMDKAGAQEVNLSFITPASLWQESGRYNVFGKELLRFKDRKENEFVLGPTHEEAMLSLVKNKITSYKQLPLHLYQIGLKFRDEARPRFGLLRCREFLMKDGYSFHANEEDLGCEFELMYKTYSQILQRMGLDFRAVEADSGAIGGSGSKEFMVLAKNGEDDILICENCDYAANVEAAKRAKKTCQDERPEANYASKFHTPNIKTIDSLAQFFKINAFYTIKAVVKKAIYENESKLVVFFIRGSDDLQEIKAQNACSALELVDASEEELEKAGLVAGFIGFVGLKDIDFYIDFELENEKQMIMGANEKDYHLIGIDVVNLNKDRFKDLIEVKEGDCCAKCGAKLKQSKGIEVGHIFKLGQKYSKAMNANFLDENGKSQPFYMGCYGIGVSRLLAVAIEASHDEKGCIWNKTLAPFVLEIIVSNLKDEKALEFANKLYEDLTNLGLEVLLDDRNERFGVKMNDFELMGFPYALVIGKGLENNEIELIQREGLVKELIKTDELMEILKKKVL</sequence>